<feature type="chain" id="PRO_1000010591" description="Peptidyl-tRNA hydrolase">
    <location>
        <begin position="1"/>
        <end position="191"/>
    </location>
</feature>
<feature type="active site" description="Proton acceptor" evidence="1">
    <location>
        <position position="22"/>
    </location>
</feature>
<feature type="binding site" evidence="1">
    <location>
        <position position="17"/>
    </location>
    <ligand>
        <name>tRNA</name>
        <dbReference type="ChEBI" id="CHEBI:17843"/>
    </ligand>
</feature>
<feature type="binding site" evidence="1">
    <location>
        <position position="68"/>
    </location>
    <ligand>
        <name>tRNA</name>
        <dbReference type="ChEBI" id="CHEBI:17843"/>
    </ligand>
</feature>
<feature type="binding site" evidence="1">
    <location>
        <position position="70"/>
    </location>
    <ligand>
        <name>tRNA</name>
        <dbReference type="ChEBI" id="CHEBI:17843"/>
    </ligand>
</feature>
<feature type="binding site" evidence="1">
    <location>
        <position position="116"/>
    </location>
    <ligand>
        <name>tRNA</name>
        <dbReference type="ChEBI" id="CHEBI:17843"/>
    </ligand>
</feature>
<feature type="site" description="Discriminates between blocked and unblocked aminoacyl-tRNA" evidence="1">
    <location>
        <position position="12"/>
    </location>
</feature>
<feature type="site" description="Stabilizes the basic form of H active site to accept a proton" evidence="1">
    <location>
        <position position="95"/>
    </location>
</feature>
<accession>A0Q6M6</accession>
<name>PTH_FRATN</name>
<evidence type="ECO:0000255" key="1">
    <source>
        <dbReference type="HAMAP-Rule" id="MF_00083"/>
    </source>
</evidence>
<organism>
    <name type="scientific">Francisella tularensis subsp. novicida (strain U112)</name>
    <dbReference type="NCBI Taxonomy" id="401614"/>
    <lineage>
        <taxon>Bacteria</taxon>
        <taxon>Pseudomonadati</taxon>
        <taxon>Pseudomonadota</taxon>
        <taxon>Gammaproteobacteria</taxon>
        <taxon>Thiotrichales</taxon>
        <taxon>Francisellaceae</taxon>
        <taxon>Francisella</taxon>
    </lineage>
</organism>
<protein>
    <recommendedName>
        <fullName evidence="1">Peptidyl-tRNA hydrolase</fullName>
        <shortName evidence="1">Pth</shortName>
        <ecNumber evidence="1">3.1.1.29</ecNumber>
    </recommendedName>
</protein>
<reference key="1">
    <citation type="journal article" date="2007" name="Genome Biol.">
        <title>Comparison of Francisella tularensis genomes reveals evolutionary events associated with the emergence of human pathogenic strains.</title>
        <authorList>
            <person name="Rohmer L."/>
            <person name="Fong C."/>
            <person name="Abmayr S."/>
            <person name="Wasnick M."/>
            <person name="Larson Freeman T.J."/>
            <person name="Radey M."/>
            <person name="Guina T."/>
            <person name="Svensson K."/>
            <person name="Hayden H.S."/>
            <person name="Jacobs M."/>
            <person name="Gallagher L.A."/>
            <person name="Manoil C."/>
            <person name="Ernst R.K."/>
            <person name="Drees B."/>
            <person name="Buckley D."/>
            <person name="Haugen E."/>
            <person name="Bovee D."/>
            <person name="Zhou Y."/>
            <person name="Chang J."/>
            <person name="Levy R."/>
            <person name="Lim R."/>
            <person name="Gillett W."/>
            <person name="Guenthener D."/>
            <person name="Kang A."/>
            <person name="Shaffer S.A."/>
            <person name="Taylor G."/>
            <person name="Chen J."/>
            <person name="Gallis B."/>
            <person name="D'Argenio D.A."/>
            <person name="Forsman M."/>
            <person name="Olson M.V."/>
            <person name="Goodlett D.R."/>
            <person name="Kaul R."/>
            <person name="Miller S.I."/>
            <person name="Brittnacher M.J."/>
        </authorList>
    </citation>
    <scope>NUCLEOTIDE SEQUENCE [LARGE SCALE GENOMIC DNA]</scope>
    <source>
        <strain>U112</strain>
    </source>
</reference>
<comment type="function">
    <text evidence="1">Hydrolyzes ribosome-free peptidyl-tRNAs (with 1 or more amino acids incorporated), which drop off the ribosome during protein synthesis, or as a result of ribosome stalling.</text>
</comment>
<comment type="function">
    <text evidence="1">Catalyzes the release of premature peptidyl moieties from peptidyl-tRNA molecules trapped in stalled 50S ribosomal subunits, and thus maintains levels of free tRNAs and 50S ribosomes.</text>
</comment>
<comment type="catalytic activity">
    <reaction evidence="1">
        <text>an N-acyl-L-alpha-aminoacyl-tRNA + H2O = an N-acyl-L-amino acid + a tRNA + H(+)</text>
        <dbReference type="Rhea" id="RHEA:54448"/>
        <dbReference type="Rhea" id="RHEA-COMP:10123"/>
        <dbReference type="Rhea" id="RHEA-COMP:13883"/>
        <dbReference type="ChEBI" id="CHEBI:15377"/>
        <dbReference type="ChEBI" id="CHEBI:15378"/>
        <dbReference type="ChEBI" id="CHEBI:59874"/>
        <dbReference type="ChEBI" id="CHEBI:78442"/>
        <dbReference type="ChEBI" id="CHEBI:138191"/>
        <dbReference type="EC" id="3.1.1.29"/>
    </reaction>
</comment>
<comment type="subunit">
    <text evidence="1">Monomer.</text>
</comment>
<comment type="subcellular location">
    <subcellularLocation>
        <location evidence="1">Cytoplasm</location>
    </subcellularLocation>
</comment>
<comment type="similarity">
    <text evidence="1">Belongs to the PTH family.</text>
</comment>
<keyword id="KW-0963">Cytoplasm</keyword>
<keyword id="KW-0378">Hydrolase</keyword>
<keyword id="KW-0694">RNA-binding</keyword>
<keyword id="KW-0820">tRNA-binding</keyword>
<gene>
    <name evidence="1" type="primary">pth</name>
    <name type="ordered locus">FTN_1003</name>
</gene>
<dbReference type="EC" id="3.1.1.29" evidence="1"/>
<dbReference type="EMBL" id="CP000439">
    <property type="protein sequence ID" value="ABK89891.1"/>
    <property type="molecule type" value="Genomic_DNA"/>
</dbReference>
<dbReference type="RefSeq" id="WP_003026214.1">
    <property type="nucleotide sequence ID" value="NZ_CP009633.1"/>
</dbReference>
<dbReference type="SMR" id="A0Q6M6"/>
<dbReference type="GeneID" id="75265262"/>
<dbReference type="KEGG" id="ftn:FTN_1003"/>
<dbReference type="KEGG" id="ftx:AW25_1006"/>
<dbReference type="BioCyc" id="FTUL401614:G1G75-1046-MONOMER"/>
<dbReference type="Proteomes" id="UP000000762">
    <property type="component" value="Chromosome"/>
</dbReference>
<dbReference type="GO" id="GO:0005737">
    <property type="term" value="C:cytoplasm"/>
    <property type="evidence" value="ECO:0007669"/>
    <property type="project" value="UniProtKB-SubCell"/>
</dbReference>
<dbReference type="GO" id="GO:0004045">
    <property type="term" value="F:peptidyl-tRNA hydrolase activity"/>
    <property type="evidence" value="ECO:0007669"/>
    <property type="project" value="UniProtKB-UniRule"/>
</dbReference>
<dbReference type="GO" id="GO:0000049">
    <property type="term" value="F:tRNA binding"/>
    <property type="evidence" value="ECO:0007669"/>
    <property type="project" value="UniProtKB-UniRule"/>
</dbReference>
<dbReference type="GO" id="GO:0006515">
    <property type="term" value="P:protein quality control for misfolded or incompletely synthesized proteins"/>
    <property type="evidence" value="ECO:0007669"/>
    <property type="project" value="UniProtKB-UniRule"/>
</dbReference>
<dbReference type="GO" id="GO:0072344">
    <property type="term" value="P:rescue of stalled ribosome"/>
    <property type="evidence" value="ECO:0007669"/>
    <property type="project" value="UniProtKB-UniRule"/>
</dbReference>
<dbReference type="CDD" id="cd00462">
    <property type="entry name" value="PTH"/>
    <property type="match status" value="1"/>
</dbReference>
<dbReference type="FunFam" id="3.40.50.1470:FF:000001">
    <property type="entry name" value="Peptidyl-tRNA hydrolase"/>
    <property type="match status" value="1"/>
</dbReference>
<dbReference type="Gene3D" id="3.40.50.1470">
    <property type="entry name" value="Peptidyl-tRNA hydrolase"/>
    <property type="match status" value="1"/>
</dbReference>
<dbReference type="HAMAP" id="MF_00083">
    <property type="entry name" value="Pept_tRNA_hydro_bact"/>
    <property type="match status" value="1"/>
</dbReference>
<dbReference type="InterPro" id="IPR001328">
    <property type="entry name" value="Pept_tRNA_hydro"/>
</dbReference>
<dbReference type="InterPro" id="IPR018171">
    <property type="entry name" value="Pept_tRNA_hydro_CS"/>
</dbReference>
<dbReference type="InterPro" id="IPR036416">
    <property type="entry name" value="Pept_tRNA_hydro_sf"/>
</dbReference>
<dbReference type="NCBIfam" id="TIGR00447">
    <property type="entry name" value="pth"/>
    <property type="match status" value="1"/>
</dbReference>
<dbReference type="PANTHER" id="PTHR17224">
    <property type="entry name" value="PEPTIDYL-TRNA HYDROLASE"/>
    <property type="match status" value="1"/>
</dbReference>
<dbReference type="PANTHER" id="PTHR17224:SF1">
    <property type="entry name" value="PEPTIDYL-TRNA HYDROLASE"/>
    <property type="match status" value="1"/>
</dbReference>
<dbReference type="Pfam" id="PF01195">
    <property type="entry name" value="Pept_tRNA_hydro"/>
    <property type="match status" value="1"/>
</dbReference>
<dbReference type="SUPFAM" id="SSF53178">
    <property type="entry name" value="Peptidyl-tRNA hydrolase-like"/>
    <property type="match status" value="1"/>
</dbReference>
<dbReference type="PROSITE" id="PS01196">
    <property type="entry name" value="PEPT_TRNA_HYDROL_2"/>
    <property type="match status" value="1"/>
</dbReference>
<proteinExistence type="inferred from homology"/>
<sequence>MPKIKMIVGLGNIGKEYQDTRHNVGEWFIAKIAQDNNQSFSSNPKLNCNLAKVSIDYNNVVLVFPTTYMNNSGLAVSKVANFYKIAPAEILVVHDELDIDSGEIRLKKGGGHGGHNGLRSINQHLGTNDYLRLRIGIGHPGHKSKVANYVLSNPSIAQKKDIDSAIDNGICFLDDIINYKLEPVMQKLHTK</sequence>